<feature type="chain" id="PRO_1000123993" description="Pyrrolidone-carboxylate peptidase">
    <location>
        <begin position="1"/>
        <end position="207"/>
    </location>
</feature>
<feature type="active site" evidence="1">
    <location>
        <position position="80"/>
    </location>
</feature>
<feature type="active site" evidence="1">
    <location>
        <position position="143"/>
    </location>
</feature>
<feature type="active site" evidence="1">
    <location>
        <position position="167"/>
    </location>
</feature>
<evidence type="ECO:0000255" key="1">
    <source>
        <dbReference type="HAMAP-Rule" id="MF_00417"/>
    </source>
</evidence>
<proteinExistence type="inferred from homology"/>
<name>PCP_COPPD</name>
<comment type="function">
    <text evidence="1">Removes 5-oxoproline from various penultimate amino acid residues except L-proline.</text>
</comment>
<comment type="catalytic activity">
    <reaction evidence="1">
        <text>Release of an N-terminal pyroglutamyl group from a polypeptide, the second amino acid generally not being Pro.</text>
        <dbReference type="EC" id="3.4.19.3"/>
    </reaction>
</comment>
<comment type="subunit">
    <text evidence="1">Homotetramer.</text>
</comment>
<comment type="subcellular location">
    <subcellularLocation>
        <location evidence="1">Cytoplasm</location>
    </subcellularLocation>
</comment>
<comment type="similarity">
    <text evidence="1">Belongs to the peptidase C15 family.</text>
</comment>
<keyword id="KW-0963">Cytoplasm</keyword>
<keyword id="KW-0378">Hydrolase</keyword>
<keyword id="KW-0645">Protease</keyword>
<keyword id="KW-1185">Reference proteome</keyword>
<keyword id="KW-0788">Thiol protease</keyword>
<accession>B5Y5X6</accession>
<dbReference type="EC" id="3.4.19.3" evidence="1"/>
<dbReference type="EMBL" id="CP001145">
    <property type="protein sequence ID" value="ACI17328.1"/>
    <property type="molecule type" value="Genomic_DNA"/>
</dbReference>
<dbReference type="RefSeq" id="WP_012543980.1">
    <property type="nucleotide sequence ID" value="NC_011295.1"/>
</dbReference>
<dbReference type="SMR" id="B5Y5X6"/>
<dbReference type="STRING" id="309798.COPRO5265_1354"/>
<dbReference type="MEROPS" id="C15.001"/>
<dbReference type="KEGG" id="cpo:COPRO5265_1354"/>
<dbReference type="eggNOG" id="COG2039">
    <property type="taxonomic scope" value="Bacteria"/>
</dbReference>
<dbReference type="HOGENOM" id="CLU_043960_4_0_9"/>
<dbReference type="OrthoDB" id="9779738at2"/>
<dbReference type="Proteomes" id="UP000001732">
    <property type="component" value="Chromosome"/>
</dbReference>
<dbReference type="GO" id="GO:0005829">
    <property type="term" value="C:cytosol"/>
    <property type="evidence" value="ECO:0007669"/>
    <property type="project" value="InterPro"/>
</dbReference>
<dbReference type="GO" id="GO:0016920">
    <property type="term" value="F:pyroglutamyl-peptidase activity"/>
    <property type="evidence" value="ECO:0007669"/>
    <property type="project" value="UniProtKB-UniRule"/>
</dbReference>
<dbReference type="GO" id="GO:0006508">
    <property type="term" value="P:proteolysis"/>
    <property type="evidence" value="ECO:0007669"/>
    <property type="project" value="UniProtKB-KW"/>
</dbReference>
<dbReference type="CDD" id="cd00501">
    <property type="entry name" value="Peptidase_C15"/>
    <property type="match status" value="1"/>
</dbReference>
<dbReference type="FunFam" id="3.40.630.20:FF:000001">
    <property type="entry name" value="Pyrrolidone-carboxylate peptidase"/>
    <property type="match status" value="1"/>
</dbReference>
<dbReference type="Gene3D" id="3.40.630.20">
    <property type="entry name" value="Peptidase C15, pyroglutamyl peptidase I-like"/>
    <property type="match status" value="1"/>
</dbReference>
<dbReference type="HAMAP" id="MF_00417">
    <property type="entry name" value="Pyrrolid_peptidase"/>
    <property type="match status" value="1"/>
</dbReference>
<dbReference type="InterPro" id="IPR000816">
    <property type="entry name" value="Peptidase_C15"/>
</dbReference>
<dbReference type="InterPro" id="IPR016125">
    <property type="entry name" value="Peptidase_C15-like"/>
</dbReference>
<dbReference type="InterPro" id="IPR036440">
    <property type="entry name" value="Peptidase_C15-like_sf"/>
</dbReference>
<dbReference type="InterPro" id="IPR029762">
    <property type="entry name" value="PGP-I_bact-type"/>
</dbReference>
<dbReference type="InterPro" id="IPR033693">
    <property type="entry name" value="PGPEP1_Glu_AS"/>
</dbReference>
<dbReference type="NCBIfam" id="NF009676">
    <property type="entry name" value="PRK13197.1"/>
    <property type="match status" value="1"/>
</dbReference>
<dbReference type="NCBIfam" id="TIGR00504">
    <property type="entry name" value="pyro_pdase"/>
    <property type="match status" value="1"/>
</dbReference>
<dbReference type="PANTHER" id="PTHR23402">
    <property type="entry name" value="PROTEASE FAMILY C15 PYROGLUTAMYL-PEPTIDASE I-RELATED"/>
    <property type="match status" value="1"/>
</dbReference>
<dbReference type="PANTHER" id="PTHR23402:SF1">
    <property type="entry name" value="PYROGLUTAMYL-PEPTIDASE I"/>
    <property type="match status" value="1"/>
</dbReference>
<dbReference type="Pfam" id="PF01470">
    <property type="entry name" value="Peptidase_C15"/>
    <property type="match status" value="1"/>
</dbReference>
<dbReference type="PIRSF" id="PIRSF015592">
    <property type="entry name" value="Prld-crbxl_pptds"/>
    <property type="match status" value="1"/>
</dbReference>
<dbReference type="PRINTS" id="PR00706">
    <property type="entry name" value="PYROGLUPTASE"/>
</dbReference>
<dbReference type="SUPFAM" id="SSF53182">
    <property type="entry name" value="Pyrrolidone carboxyl peptidase (pyroglutamate aminopeptidase)"/>
    <property type="match status" value="1"/>
</dbReference>
<dbReference type="PROSITE" id="PS01333">
    <property type="entry name" value="PYRASE_GLU"/>
    <property type="match status" value="1"/>
</dbReference>
<gene>
    <name evidence="1" type="primary">pcp</name>
    <name type="ordered locus">COPRO5265_1354</name>
</gene>
<reference key="1">
    <citation type="submission" date="2008-08" db="EMBL/GenBank/DDBJ databases">
        <title>The complete genome sequence of Coprothermobacter proteolyticus strain ATCC 5245 / DSM 5265 / BT.</title>
        <authorList>
            <person name="Dodson R.J."/>
            <person name="Durkin A.S."/>
            <person name="Wu M."/>
            <person name="Eisen J."/>
            <person name="Sutton G."/>
        </authorList>
    </citation>
    <scope>NUCLEOTIDE SEQUENCE [LARGE SCALE GENOMIC DNA]</scope>
    <source>
        <strain>ATCC 35245 / DSM 5265 / OCM 4 / BT</strain>
    </source>
</reference>
<protein>
    <recommendedName>
        <fullName evidence="1">Pyrrolidone-carboxylate peptidase</fullName>
        <ecNumber evidence="1">3.4.19.3</ecNumber>
    </recommendedName>
    <alternativeName>
        <fullName evidence="1">5-oxoprolyl-peptidase</fullName>
    </alternativeName>
    <alternativeName>
        <fullName evidence="1">Pyroglutamyl-peptidase I</fullName>
        <shortName evidence="1">PGP-I</shortName>
        <shortName evidence="1">Pyrase</shortName>
    </alternativeName>
</protein>
<sequence length="207" mass="22204">MSRILLTGFEPFGGEKVNPSELAVKQLEGKTIAGLEVVAGVLPVVTVKCIDEAVKLIEKYEPVAVLNVGQAGGRVELSIEKVAINVKDYRIPDNEGNQIRYAPVVEGGPDAYFATIPVEKIADSLVEKVIPASVSYTAGTYCCNEVFYGVSHYLRNNKPGVLNGFIHIPFILEQAAGAKPPRASMPLEVIVKGLEIAVEVVAEGLEK</sequence>
<organism>
    <name type="scientific">Coprothermobacter proteolyticus (strain ATCC 35245 / DSM 5265 / OCM 4 / BT)</name>
    <dbReference type="NCBI Taxonomy" id="309798"/>
    <lineage>
        <taxon>Bacteria</taxon>
        <taxon>Pseudomonadati</taxon>
        <taxon>Coprothermobacterota</taxon>
        <taxon>Coprothermobacteria</taxon>
        <taxon>Coprothermobacterales</taxon>
        <taxon>Coprothermobacteraceae</taxon>
        <taxon>Coprothermobacter</taxon>
    </lineage>
</organism>